<comment type="function">
    <text evidence="1">Catalyzes the circularization of gamma-N-acetyl-alpha,gamma-diaminobutyric acid (ADABA) to ectoine (1,4,5,6-tetrahydro-2-methyl-4-pyrimidine carboxylic acid), which is an excellent osmoprotectant.</text>
</comment>
<comment type="catalytic activity">
    <reaction>
        <text>(2S)-4-acetamido-2-aminobutanoate = L-ectoine + H2O</text>
        <dbReference type="Rhea" id="RHEA:17281"/>
        <dbReference type="ChEBI" id="CHEBI:15377"/>
        <dbReference type="ChEBI" id="CHEBI:58515"/>
        <dbReference type="ChEBI" id="CHEBI:58929"/>
        <dbReference type="EC" id="4.2.1.108"/>
    </reaction>
</comment>
<comment type="pathway">
    <text>Amine and polyamine biosynthesis; ectoine biosynthesis; L-ectoine from L-aspartate 4-semialdehyde: step 3/3.</text>
</comment>
<comment type="similarity">
    <text evidence="2">Belongs to the ectoine synthase family.</text>
</comment>
<keyword id="KW-0456">Lyase</keyword>
<name>ECTC_STRAQ</name>
<dbReference type="EC" id="4.2.1.108"/>
<dbReference type="EMBL" id="AY524544">
    <property type="protein sequence ID" value="AAS02096.1"/>
    <property type="molecule type" value="Genomic_DNA"/>
</dbReference>
<dbReference type="RefSeq" id="WP_007450483.1">
    <property type="nucleotide sequence ID" value="NZ_JBIALE010000002.1"/>
</dbReference>
<dbReference type="SMR" id="Q6QUY8"/>
<dbReference type="UniPathway" id="UPA00067">
    <property type="reaction ID" value="UER00123"/>
</dbReference>
<dbReference type="GO" id="GO:0033990">
    <property type="term" value="F:ectoine synthase activity"/>
    <property type="evidence" value="ECO:0007669"/>
    <property type="project" value="UniProtKB-EC"/>
</dbReference>
<dbReference type="GO" id="GO:0019491">
    <property type="term" value="P:ectoine biosynthetic process"/>
    <property type="evidence" value="ECO:0007669"/>
    <property type="project" value="UniProtKB-UniRule"/>
</dbReference>
<dbReference type="CDD" id="cd06978">
    <property type="entry name" value="cupin_EctC"/>
    <property type="match status" value="1"/>
</dbReference>
<dbReference type="Gene3D" id="2.60.120.10">
    <property type="entry name" value="Jelly Rolls"/>
    <property type="match status" value="1"/>
</dbReference>
<dbReference type="HAMAP" id="MF_01255">
    <property type="entry name" value="Ectoine_synth"/>
    <property type="match status" value="1"/>
</dbReference>
<dbReference type="InterPro" id="IPR010462">
    <property type="entry name" value="Ectoine_synth"/>
</dbReference>
<dbReference type="InterPro" id="IPR014710">
    <property type="entry name" value="RmlC-like_jellyroll"/>
</dbReference>
<dbReference type="InterPro" id="IPR011051">
    <property type="entry name" value="RmlC_Cupin_sf"/>
</dbReference>
<dbReference type="NCBIfam" id="NF009806">
    <property type="entry name" value="PRK13290.1"/>
    <property type="match status" value="1"/>
</dbReference>
<dbReference type="PANTHER" id="PTHR39289">
    <property type="match status" value="1"/>
</dbReference>
<dbReference type="PANTHER" id="PTHR39289:SF1">
    <property type="entry name" value="L-ECTOINE SYNTHASE"/>
    <property type="match status" value="1"/>
</dbReference>
<dbReference type="Pfam" id="PF06339">
    <property type="entry name" value="Ectoine_synth"/>
    <property type="match status" value="1"/>
</dbReference>
<dbReference type="SUPFAM" id="SSF51182">
    <property type="entry name" value="RmlC-like cupins"/>
    <property type="match status" value="1"/>
</dbReference>
<gene>
    <name type="primary">ectC</name>
    <name type="synonym">thpC</name>
</gene>
<accession>Q6QUY8</accession>
<evidence type="ECO:0000250" key="1"/>
<evidence type="ECO:0000305" key="2"/>
<organism>
    <name type="scientific">Streptomyces anulatus</name>
    <name type="common">Streptomyces chrysomallus</name>
    <dbReference type="NCBI Taxonomy" id="1892"/>
    <lineage>
        <taxon>Bacteria</taxon>
        <taxon>Bacillati</taxon>
        <taxon>Actinomycetota</taxon>
        <taxon>Actinomycetes</taxon>
        <taxon>Kitasatosporales</taxon>
        <taxon>Streptomycetaceae</taxon>
        <taxon>Streptomyces</taxon>
    </lineage>
</organism>
<reference key="1">
    <citation type="journal article" date="2004" name="Appl. Environ. Microbiol.">
        <title>Functional expression of the ectoine hydroxylase gene (thpD) from Streptomyces chrysomallus in Halomonas elongata.</title>
        <authorList>
            <person name="Prabhu J."/>
            <person name="Schauwecker F."/>
            <person name="Grammel N."/>
            <person name="Keller U."/>
            <person name="Bernhard M."/>
        </authorList>
    </citation>
    <scope>NUCLEOTIDE SEQUENCE [GENOMIC DNA]</scope>
    <source>
        <strain>ATCC 11523 / DSM 40128 / JCM 4296 / LMG 20459 / NBRC 15393</strain>
    </source>
</reference>
<feature type="chain" id="PRO_0000220157" description="L-ectoine synthase">
    <location>
        <begin position="1"/>
        <end position="132"/>
    </location>
</feature>
<sequence length="132" mass="14971">MIVRSFSDIENTDRHVKAASGTWESKRIVLAKEKVGFSLHETVLYAGTETSMWYANHIEAVLCTEGEAELTNDETGETHWITPGTMYLLDGHERHTMRPKTDFRCVCVFNPPVTGREDHDENGVYPLLTEEA</sequence>
<proteinExistence type="inferred from homology"/>
<protein>
    <recommendedName>
        <fullName>L-ectoine synthase</fullName>
        <ecNumber>4.2.1.108</ecNumber>
    </recommendedName>
    <alternativeName>
        <fullName>N-acetyldiaminobutyrate dehydratase</fullName>
    </alternativeName>
</protein>